<reference key="1">
    <citation type="journal article" date="1997" name="Proc. Natl. Acad. Sci. U.S.A.">
        <title>Complete nucleotide sequence of the chloroplast genome from the green alga Chlorella vulgaris: the existence of genes possibly involved in chloroplast division.</title>
        <authorList>
            <person name="Wakasugi T."/>
            <person name="Nagai T."/>
            <person name="Kapoor M."/>
            <person name="Sugita M."/>
            <person name="Ito M."/>
            <person name="Ito S."/>
            <person name="Tsudzuki J."/>
            <person name="Nakashima K."/>
            <person name="Tsudzuki T."/>
            <person name="Suzuki Y."/>
            <person name="Hamada A."/>
            <person name="Ohta T."/>
            <person name="Inamura A."/>
            <person name="Yoshinaga K."/>
            <person name="Sugiura M."/>
        </authorList>
    </citation>
    <scope>NUCLEOTIDE SEQUENCE [LARGE SCALE GENOMIC DNA]</scope>
    <source>
        <strain>IAM C-27 / Tamiya</strain>
    </source>
</reference>
<sequence length="103" mass="11527">MAGIQQKRKTIKSFKTRRKVVPVLIPKKGQAVISNTGEPASRYIIDYKNTQLLVKFISPQGKILSRRATGLTAKQQRIMANAIKRARMGGLVPFVNYELGSKK</sequence>
<evidence type="ECO:0000305" key="1"/>
<name>RR18_CHLVU</name>
<gene>
    <name type="primary">rps18</name>
</gene>
<geneLocation type="chloroplast"/>
<organism>
    <name type="scientific">Chlorella vulgaris</name>
    <name type="common">Green alga</name>
    <dbReference type="NCBI Taxonomy" id="3077"/>
    <lineage>
        <taxon>Eukaryota</taxon>
        <taxon>Viridiplantae</taxon>
        <taxon>Chlorophyta</taxon>
        <taxon>core chlorophytes</taxon>
        <taxon>Trebouxiophyceae</taxon>
        <taxon>Chlorellales</taxon>
        <taxon>Chlorellaceae</taxon>
        <taxon>Chlorella clade</taxon>
        <taxon>Chlorella</taxon>
    </lineage>
</organism>
<accession>P56353</accession>
<keyword id="KW-0150">Chloroplast</keyword>
<keyword id="KW-0934">Plastid</keyword>
<keyword id="KW-0687">Ribonucleoprotein</keyword>
<keyword id="KW-0689">Ribosomal protein</keyword>
<keyword id="KW-0694">RNA-binding</keyword>
<keyword id="KW-0699">rRNA-binding</keyword>
<feature type="chain" id="PRO_0000111281" description="Small ribosomal subunit protein bS18c">
    <location>
        <begin position="1"/>
        <end position="103"/>
    </location>
</feature>
<comment type="subunit">
    <text>Part of the 30S ribosomal subunit.</text>
</comment>
<comment type="subcellular location">
    <subcellularLocation>
        <location>Plastid</location>
        <location>Chloroplast</location>
    </subcellularLocation>
</comment>
<comment type="similarity">
    <text evidence="1">Belongs to the bacterial ribosomal protein bS18 family.</text>
</comment>
<proteinExistence type="inferred from homology"/>
<dbReference type="EMBL" id="AB001684">
    <property type="protein sequence ID" value="BAA57881.1"/>
    <property type="molecule type" value="Genomic_DNA"/>
</dbReference>
<dbReference type="PIR" id="T07234">
    <property type="entry name" value="T07234"/>
</dbReference>
<dbReference type="RefSeq" id="NP_045806.1">
    <property type="nucleotide sequence ID" value="NC_001865.1"/>
</dbReference>
<dbReference type="SMR" id="P56353"/>
<dbReference type="GeneID" id="809138"/>
<dbReference type="GO" id="GO:0009507">
    <property type="term" value="C:chloroplast"/>
    <property type="evidence" value="ECO:0007669"/>
    <property type="project" value="UniProtKB-SubCell"/>
</dbReference>
<dbReference type="GO" id="GO:0005763">
    <property type="term" value="C:mitochondrial small ribosomal subunit"/>
    <property type="evidence" value="ECO:0007669"/>
    <property type="project" value="TreeGrafter"/>
</dbReference>
<dbReference type="GO" id="GO:0070181">
    <property type="term" value="F:small ribosomal subunit rRNA binding"/>
    <property type="evidence" value="ECO:0007669"/>
    <property type="project" value="TreeGrafter"/>
</dbReference>
<dbReference type="GO" id="GO:0003735">
    <property type="term" value="F:structural constituent of ribosome"/>
    <property type="evidence" value="ECO:0007669"/>
    <property type="project" value="InterPro"/>
</dbReference>
<dbReference type="GO" id="GO:0006412">
    <property type="term" value="P:translation"/>
    <property type="evidence" value="ECO:0007669"/>
    <property type="project" value="UniProtKB-UniRule"/>
</dbReference>
<dbReference type="Gene3D" id="4.10.640.10">
    <property type="entry name" value="Ribosomal protein S18"/>
    <property type="match status" value="1"/>
</dbReference>
<dbReference type="HAMAP" id="MF_00270">
    <property type="entry name" value="Ribosomal_bS18"/>
    <property type="match status" value="1"/>
</dbReference>
<dbReference type="InterPro" id="IPR001648">
    <property type="entry name" value="Ribosomal_bS18"/>
</dbReference>
<dbReference type="InterPro" id="IPR018275">
    <property type="entry name" value="Ribosomal_bS18_CS"/>
</dbReference>
<dbReference type="InterPro" id="IPR036870">
    <property type="entry name" value="Ribosomal_bS18_sf"/>
</dbReference>
<dbReference type="NCBIfam" id="TIGR00165">
    <property type="entry name" value="S18"/>
    <property type="match status" value="1"/>
</dbReference>
<dbReference type="PANTHER" id="PTHR13479">
    <property type="entry name" value="30S RIBOSOMAL PROTEIN S18"/>
    <property type="match status" value="1"/>
</dbReference>
<dbReference type="PANTHER" id="PTHR13479:SF40">
    <property type="entry name" value="SMALL RIBOSOMAL SUBUNIT PROTEIN BS18M"/>
    <property type="match status" value="1"/>
</dbReference>
<dbReference type="Pfam" id="PF01084">
    <property type="entry name" value="Ribosomal_S18"/>
    <property type="match status" value="1"/>
</dbReference>
<dbReference type="PRINTS" id="PR00974">
    <property type="entry name" value="RIBOSOMALS18"/>
</dbReference>
<dbReference type="SUPFAM" id="SSF46911">
    <property type="entry name" value="Ribosomal protein S18"/>
    <property type="match status" value="1"/>
</dbReference>
<dbReference type="PROSITE" id="PS00057">
    <property type="entry name" value="RIBOSOMAL_S18"/>
    <property type="match status" value="1"/>
</dbReference>
<protein>
    <recommendedName>
        <fullName evidence="1">Small ribosomal subunit protein bS18c</fullName>
    </recommendedName>
    <alternativeName>
        <fullName>30S ribosomal protein S18, chloroplastic</fullName>
    </alternativeName>
</protein>